<gene>
    <name type="primary">cbp4</name>
    <name type="ORF">ACLA_097490</name>
</gene>
<protein>
    <recommendedName>
        <fullName>Assembly factor cbp4</fullName>
    </recommendedName>
    <alternativeName>
        <fullName>Cytochrome b mRNA-processing protein 4</fullName>
    </alternativeName>
</protein>
<dbReference type="EMBL" id="DS027058">
    <property type="protein sequence ID" value="EAW08809.1"/>
    <property type="molecule type" value="Genomic_DNA"/>
</dbReference>
<dbReference type="RefSeq" id="XP_001270235.1">
    <property type="nucleotide sequence ID" value="XM_001270234.1"/>
</dbReference>
<dbReference type="EnsemblFungi" id="EAW08809">
    <property type="protein sequence ID" value="EAW08809"/>
    <property type="gene ID" value="ACLA_097490"/>
</dbReference>
<dbReference type="GeneID" id="4702407"/>
<dbReference type="KEGG" id="act:ACLA_097490"/>
<dbReference type="VEuPathDB" id="FungiDB:ACLA_097490"/>
<dbReference type="eggNOG" id="ENOG502S2G8">
    <property type="taxonomic scope" value="Eukaryota"/>
</dbReference>
<dbReference type="HOGENOM" id="CLU_136894_0_0_1"/>
<dbReference type="OMA" id="DKPIWVV"/>
<dbReference type="OrthoDB" id="5576752at2759"/>
<dbReference type="Proteomes" id="UP000006701">
    <property type="component" value="Unassembled WGS sequence"/>
</dbReference>
<dbReference type="GO" id="GO:0005743">
    <property type="term" value="C:mitochondrial inner membrane"/>
    <property type="evidence" value="ECO:0007669"/>
    <property type="project" value="UniProtKB-SubCell"/>
</dbReference>
<dbReference type="GO" id="GO:0034551">
    <property type="term" value="P:mitochondrial respiratory chain complex III assembly"/>
    <property type="evidence" value="ECO:0007669"/>
    <property type="project" value="TreeGrafter"/>
</dbReference>
<dbReference type="InterPro" id="IPR012420">
    <property type="entry name" value="Cbp4"/>
</dbReference>
<dbReference type="PANTHER" id="PTHR28202">
    <property type="entry name" value="ASSEMBLY FACTOR CBP4"/>
    <property type="match status" value="1"/>
</dbReference>
<dbReference type="PANTHER" id="PTHR28202:SF1">
    <property type="entry name" value="ASSEMBLY FACTOR CBP4"/>
    <property type="match status" value="1"/>
</dbReference>
<dbReference type="Pfam" id="PF07960">
    <property type="entry name" value="CBP4"/>
    <property type="match status" value="1"/>
</dbReference>
<name>CBP4_ASPCL</name>
<reference key="1">
    <citation type="journal article" date="2008" name="PLoS Genet.">
        <title>Genomic islands in the pathogenic filamentous fungus Aspergillus fumigatus.</title>
        <authorList>
            <person name="Fedorova N.D."/>
            <person name="Khaldi N."/>
            <person name="Joardar V.S."/>
            <person name="Maiti R."/>
            <person name="Amedeo P."/>
            <person name="Anderson M.J."/>
            <person name="Crabtree J."/>
            <person name="Silva J.C."/>
            <person name="Badger J.H."/>
            <person name="Albarraq A."/>
            <person name="Angiuoli S."/>
            <person name="Bussey H."/>
            <person name="Bowyer P."/>
            <person name="Cotty P.J."/>
            <person name="Dyer P.S."/>
            <person name="Egan A."/>
            <person name="Galens K."/>
            <person name="Fraser-Liggett C.M."/>
            <person name="Haas B.J."/>
            <person name="Inman J.M."/>
            <person name="Kent R."/>
            <person name="Lemieux S."/>
            <person name="Malavazi I."/>
            <person name="Orvis J."/>
            <person name="Roemer T."/>
            <person name="Ronning C.M."/>
            <person name="Sundaram J.P."/>
            <person name="Sutton G."/>
            <person name="Turner G."/>
            <person name="Venter J.C."/>
            <person name="White O.R."/>
            <person name="Whitty B.R."/>
            <person name="Youngman P."/>
            <person name="Wolfe K.H."/>
            <person name="Goldman G.H."/>
            <person name="Wortman J.R."/>
            <person name="Jiang B."/>
            <person name="Denning D.W."/>
            <person name="Nierman W.C."/>
        </authorList>
    </citation>
    <scope>NUCLEOTIDE SEQUENCE [LARGE SCALE GENOMIC DNA]</scope>
    <source>
        <strain>ATCC 1007 / CBS 513.65 / DSM 816 / NCTC 3887 / NRRL 1 / QM 1276 / 107</strain>
    </source>
</reference>
<feature type="chain" id="PRO_0000330118" description="Assembly factor cbp4">
    <location>
        <begin position="1"/>
        <end position="116"/>
    </location>
</feature>
<feature type="transmembrane region" description="Helical" evidence="2">
    <location>
        <begin position="7"/>
        <end position="25"/>
    </location>
</feature>
<feature type="region of interest" description="Disordered" evidence="3">
    <location>
        <begin position="86"/>
        <end position="116"/>
    </location>
</feature>
<feature type="coiled-coil region" evidence="2">
    <location>
        <begin position="77"/>
        <end position="116"/>
    </location>
</feature>
<organism>
    <name type="scientific">Aspergillus clavatus (strain ATCC 1007 / CBS 513.65 / DSM 816 / NCTC 3887 / NRRL 1 / QM 1276 / 107)</name>
    <dbReference type="NCBI Taxonomy" id="344612"/>
    <lineage>
        <taxon>Eukaryota</taxon>
        <taxon>Fungi</taxon>
        <taxon>Dikarya</taxon>
        <taxon>Ascomycota</taxon>
        <taxon>Pezizomycotina</taxon>
        <taxon>Eurotiomycetes</taxon>
        <taxon>Eurotiomycetidae</taxon>
        <taxon>Eurotiales</taxon>
        <taxon>Aspergillaceae</taxon>
        <taxon>Aspergillus</taxon>
        <taxon>Aspergillus subgen. Fumigati</taxon>
    </lineage>
</organism>
<sequence>MSRVGTWLKMLVAGTVICVGGPAFVQSIRPTDEELFKRYNPDLQKRSLEEGDRRAREFDEYVTRLKQWSKSDKSIWFAAQEQQEQKRAELDAQQSRSKDEARIQREEMRKELLGEK</sequence>
<evidence type="ECO:0000250" key="1"/>
<evidence type="ECO:0000255" key="2"/>
<evidence type="ECO:0000256" key="3">
    <source>
        <dbReference type="SAM" id="MobiDB-lite"/>
    </source>
</evidence>
<evidence type="ECO:0000305" key="4"/>
<comment type="function">
    <text evidence="1">Essential for the assembly of ubiquinol-cytochrome c reductase. It has a direct effect on the correct occurrence of the Rieske protein, core 4, core 5 and apocytochrome b (By similarity).</text>
</comment>
<comment type="subcellular location">
    <subcellularLocation>
        <location evidence="1">Mitochondrion inner membrane</location>
        <topology evidence="1">Single-pass membrane protein</topology>
    </subcellularLocation>
</comment>
<comment type="similarity">
    <text evidence="4">Belongs to the CBP4 family.</text>
</comment>
<accession>A1CMM2</accession>
<proteinExistence type="inferred from homology"/>
<keyword id="KW-0143">Chaperone</keyword>
<keyword id="KW-0175">Coiled coil</keyword>
<keyword id="KW-0472">Membrane</keyword>
<keyword id="KW-0496">Mitochondrion</keyword>
<keyword id="KW-0999">Mitochondrion inner membrane</keyword>
<keyword id="KW-1185">Reference proteome</keyword>
<keyword id="KW-0812">Transmembrane</keyword>
<keyword id="KW-1133">Transmembrane helix</keyword>